<accession>Q8HVS3</accession>
<evidence type="ECO:0000255" key="1">
    <source>
        <dbReference type="HAMAP-Rule" id="MF_01351"/>
    </source>
</evidence>
<name>NDHI_FLOPE</name>
<dbReference type="EC" id="7.1.1.-" evidence="1"/>
<dbReference type="EMBL" id="AF383790">
    <property type="protein sequence ID" value="AAN61731.1"/>
    <property type="molecule type" value="Genomic_DNA"/>
</dbReference>
<dbReference type="SMR" id="Q8HVS3"/>
<dbReference type="GO" id="GO:0009535">
    <property type="term" value="C:chloroplast thylakoid membrane"/>
    <property type="evidence" value="ECO:0007669"/>
    <property type="project" value="UniProtKB-SubCell"/>
</dbReference>
<dbReference type="GO" id="GO:0051539">
    <property type="term" value="F:4 iron, 4 sulfur cluster binding"/>
    <property type="evidence" value="ECO:0007669"/>
    <property type="project" value="UniProtKB-KW"/>
</dbReference>
<dbReference type="GO" id="GO:0005506">
    <property type="term" value="F:iron ion binding"/>
    <property type="evidence" value="ECO:0007669"/>
    <property type="project" value="UniProtKB-UniRule"/>
</dbReference>
<dbReference type="GO" id="GO:0008137">
    <property type="term" value="F:NADH dehydrogenase (ubiquinone) activity"/>
    <property type="evidence" value="ECO:0007669"/>
    <property type="project" value="InterPro"/>
</dbReference>
<dbReference type="GO" id="GO:0048038">
    <property type="term" value="F:quinone binding"/>
    <property type="evidence" value="ECO:0007669"/>
    <property type="project" value="UniProtKB-KW"/>
</dbReference>
<dbReference type="GO" id="GO:0019684">
    <property type="term" value="P:photosynthesis, light reaction"/>
    <property type="evidence" value="ECO:0007669"/>
    <property type="project" value="UniProtKB-UniRule"/>
</dbReference>
<dbReference type="FunFam" id="3.30.70.3270:FF:000006">
    <property type="entry name" value="NAD(P)H-quinone oxidoreductase subunit I, chloroplastic"/>
    <property type="match status" value="1"/>
</dbReference>
<dbReference type="Gene3D" id="3.30.70.3270">
    <property type="match status" value="1"/>
</dbReference>
<dbReference type="HAMAP" id="MF_01351">
    <property type="entry name" value="NDH1_NuoI"/>
    <property type="match status" value="1"/>
</dbReference>
<dbReference type="InterPro" id="IPR017896">
    <property type="entry name" value="4Fe4S_Fe-S-bd"/>
</dbReference>
<dbReference type="InterPro" id="IPR017900">
    <property type="entry name" value="4Fe4S_Fe_S_CS"/>
</dbReference>
<dbReference type="InterPro" id="IPR010226">
    <property type="entry name" value="NADH_quinone_OxRdtase_chainI"/>
</dbReference>
<dbReference type="InterPro" id="IPR004497">
    <property type="entry name" value="NDHI"/>
</dbReference>
<dbReference type="NCBIfam" id="TIGR00403">
    <property type="entry name" value="ndhI"/>
    <property type="match status" value="1"/>
</dbReference>
<dbReference type="NCBIfam" id="TIGR01971">
    <property type="entry name" value="NuoI"/>
    <property type="match status" value="1"/>
</dbReference>
<dbReference type="NCBIfam" id="NF004537">
    <property type="entry name" value="PRK05888.1-3"/>
    <property type="match status" value="1"/>
</dbReference>
<dbReference type="PANTHER" id="PTHR47275">
    <property type="entry name" value="NAD(P)H-QUINONE OXIDOREDUCTASE SUBUNIT I, CHLOROPLASTIC"/>
    <property type="match status" value="1"/>
</dbReference>
<dbReference type="PANTHER" id="PTHR47275:SF1">
    <property type="entry name" value="NAD(P)H-QUINONE OXIDOREDUCTASE SUBUNIT I, CHLOROPLASTIC"/>
    <property type="match status" value="1"/>
</dbReference>
<dbReference type="Pfam" id="PF00037">
    <property type="entry name" value="Fer4"/>
    <property type="match status" value="2"/>
</dbReference>
<dbReference type="SUPFAM" id="SSF54862">
    <property type="entry name" value="4Fe-4S ferredoxins"/>
    <property type="match status" value="1"/>
</dbReference>
<dbReference type="PROSITE" id="PS00198">
    <property type="entry name" value="4FE4S_FER_1"/>
    <property type="match status" value="2"/>
</dbReference>
<dbReference type="PROSITE" id="PS51379">
    <property type="entry name" value="4FE4S_FER_2"/>
    <property type="match status" value="2"/>
</dbReference>
<keyword id="KW-0004">4Fe-4S</keyword>
<keyword id="KW-0150">Chloroplast</keyword>
<keyword id="KW-0408">Iron</keyword>
<keyword id="KW-0411">Iron-sulfur</keyword>
<keyword id="KW-0472">Membrane</keyword>
<keyword id="KW-0479">Metal-binding</keyword>
<keyword id="KW-0520">NAD</keyword>
<keyword id="KW-0521">NADP</keyword>
<keyword id="KW-0934">Plastid</keyword>
<keyword id="KW-0618">Plastoquinone</keyword>
<keyword id="KW-0874">Quinone</keyword>
<keyword id="KW-0677">Repeat</keyword>
<keyword id="KW-0793">Thylakoid</keyword>
<keyword id="KW-1278">Translocase</keyword>
<feature type="chain" id="PRO_0000250790" description="NAD(P)H-quinone oxidoreductase subunit I, chloroplastic">
    <location>
        <begin position="1"/>
        <end position="166"/>
    </location>
</feature>
<feature type="domain" description="4Fe-4S ferredoxin-type 1" evidence="1">
    <location>
        <begin position="55"/>
        <end position="84"/>
    </location>
</feature>
<feature type="domain" description="4Fe-4S ferredoxin-type 2" evidence="1">
    <location>
        <begin position="95"/>
        <end position="124"/>
    </location>
</feature>
<feature type="binding site" evidence="1">
    <location>
        <position position="64"/>
    </location>
    <ligand>
        <name>[4Fe-4S] cluster</name>
        <dbReference type="ChEBI" id="CHEBI:49883"/>
        <label>1</label>
    </ligand>
</feature>
<feature type="binding site" evidence="1">
    <location>
        <position position="67"/>
    </location>
    <ligand>
        <name>[4Fe-4S] cluster</name>
        <dbReference type="ChEBI" id="CHEBI:49883"/>
        <label>1</label>
    </ligand>
</feature>
<feature type="binding site" evidence="1">
    <location>
        <position position="70"/>
    </location>
    <ligand>
        <name>[4Fe-4S] cluster</name>
        <dbReference type="ChEBI" id="CHEBI:49883"/>
        <label>1</label>
    </ligand>
</feature>
<feature type="binding site" evidence="1">
    <location>
        <position position="74"/>
    </location>
    <ligand>
        <name>[4Fe-4S] cluster</name>
        <dbReference type="ChEBI" id="CHEBI:49883"/>
        <label>2</label>
    </ligand>
</feature>
<feature type="binding site" evidence="1">
    <location>
        <position position="104"/>
    </location>
    <ligand>
        <name>[4Fe-4S] cluster</name>
        <dbReference type="ChEBI" id="CHEBI:49883"/>
        <label>2</label>
    </ligand>
</feature>
<feature type="binding site" evidence="1">
    <location>
        <position position="107"/>
    </location>
    <ligand>
        <name>[4Fe-4S] cluster</name>
        <dbReference type="ChEBI" id="CHEBI:49883"/>
        <label>2</label>
    </ligand>
</feature>
<feature type="binding site" evidence="1">
    <location>
        <position position="110"/>
    </location>
    <ligand>
        <name>[4Fe-4S] cluster</name>
        <dbReference type="ChEBI" id="CHEBI:49883"/>
        <label>2</label>
    </ligand>
</feature>
<feature type="binding site" evidence="1">
    <location>
        <position position="114"/>
    </location>
    <ligand>
        <name>[4Fe-4S] cluster</name>
        <dbReference type="ChEBI" id="CHEBI:49883"/>
        <label>1</label>
    </ligand>
</feature>
<proteinExistence type="inferred from homology"/>
<sequence length="166" mass="19475">MFPMVTEFMNYGQQTVRAARYIGQGFMITLSHANRLPVTIQYPYEKLITSERFRGRIHFEFDKCIACEVCVRVCPIDLPVVDWKLETDIRKKRLLNYSIDFGICIFCGNCVEYCPTNCLSMTEEYELSTYDRHELNYNQIALGRLPMSIIDDYTIRTILNLPEIKT</sequence>
<gene>
    <name evidence="1" type="primary">ndhI</name>
</gene>
<reference key="1">
    <citation type="submission" date="2003-01" db="EMBL/GenBank/DDBJ databases">
        <title>Chloroplast DNA phylogeny of tribe Heliantheae (Asteraceae).</title>
        <authorList>
            <person name="Panero J.L."/>
            <person name="Baldwin B.G."/>
            <person name="Schilling E.E."/>
            <person name="Clevinger J.A."/>
        </authorList>
    </citation>
    <scope>NUCLEOTIDE SEQUENCE [GENOMIC DNA]</scope>
</reference>
<comment type="function">
    <text evidence="1">NDH shuttles electrons from NAD(P)H:plastoquinone, via FMN and iron-sulfur (Fe-S) centers, to quinones in the photosynthetic chain and possibly in a chloroplast respiratory chain. The immediate electron acceptor for the enzyme in this species is believed to be plastoquinone. Couples the redox reaction to proton translocation, and thus conserves the redox energy in a proton gradient.</text>
</comment>
<comment type="catalytic activity">
    <reaction evidence="1">
        <text>a plastoquinone + NADH + (n+1) H(+)(in) = a plastoquinol + NAD(+) + n H(+)(out)</text>
        <dbReference type="Rhea" id="RHEA:42608"/>
        <dbReference type="Rhea" id="RHEA-COMP:9561"/>
        <dbReference type="Rhea" id="RHEA-COMP:9562"/>
        <dbReference type="ChEBI" id="CHEBI:15378"/>
        <dbReference type="ChEBI" id="CHEBI:17757"/>
        <dbReference type="ChEBI" id="CHEBI:57540"/>
        <dbReference type="ChEBI" id="CHEBI:57945"/>
        <dbReference type="ChEBI" id="CHEBI:62192"/>
    </reaction>
</comment>
<comment type="catalytic activity">
    <reaction evidence="1">
        <text>a plastoquinone + NADPH + (n+1) H(+)(in) = a plastoquinol + NADP(+) + n H(+)(out)</text>
        <dbReference type="Rhea" id="RHEA:42612"/>
        <dbReference type="Rhea" id="RHEA-COMP:9561"/>
        <dbReference type="Rhea" id="RHEA-COMP:9562"/>
        <dbReference type="ChEBI" id="CHEBI:15378"/>
        <dbReference type="ChEBI" id="CHEBI:17757"/>
        <dbReference type="ChEBI" id="CHEBI:57783"/>
        <dbReference type="ChEBI" id="CHEBI:58349"/>
        <dbReference type="ChEBI" id="CHEBI:62192"/>
    </reaction>
</comment>
<comment type="cofactor">
    <cofactor evidence="1">
        <name>[4Fe-4S] cluster</name>
        <dbReference type="ChEBI" id="CHEBI:49883"/>
    </cofactor>
    <text evidence="1">Binds 2 [4Fe-4S] clusters per subunit.</text>
</comment>
<comment type="subunit">
    <text evidence="1">NDH is composed of at least 16 different subunits, 5 of which are encoded in the nucleus.</text>
</comment>
<comment type="subcellular location">
    <subcellularLocation>
        <location evidence="1">Plastid</location>
        <location evidence="1">Chloroplast thylakoid membrane</location>
        <topology evidence="1">Peripheral membrane protein</topology>
    </subcellularLocation>
</comment>
<comment type="similarity">
    <text evidence="1">Belongs to the complex I 23 kDa subunit family.</text>
</comment>
<protein>
    <recommendedName>
        <fullName evidence="1">NAD(P)H-quinone oxidoreductase subunit I, chloroplastic</fullName>
        <ecNumber evidence="1">7.1.1.-</ecNumber>
    </recommendedName>
    <alternativeName>
        <fullName evidence="1">NAD(P)H dehydrogenase subunit I</fullName>
        <shortName evidence="1">NDH subunit I</shortName>
    </alternativeName>
    <alternativeName>
        <fullName evidence="1">NADH-plastoquinone oxidoreductase subunit I</fullName>
    </alternativeName>
</protein>
<organism>
    <name type="scientific">Florestina pedata</name>
    <name type="common">Stevia pedata</name>
    <dbReference type="NCBI Taxonomy" id="183106"/>
    <lineage>
        <taxon>Eukaryota</taxon>
        <taxon>Viridiplantae</taxon>
        <taxon>Streptophyta</taxon>
        <taxon>Embryophyta</taxon>
        <taxon>Tracheophyta</taxon>
        <taxon>Spermatophyta</taxon>
        <taxon>Magnoliopsida</taxon>
        <taxon>eudicotyledons</taxon>
        <taxon>Gunneridae</taxon>
        <taxon>Pentapetalae</taxon>
        <taxon>asterids</taxon>
        <taxon>campanulids</taxon>
        <taxon>Asterales</taxon>
        <taxon>Asteraceae</taxon>
        <taxon>Asteroideae</taxon>
        <taxon>Heliantheae alliance</taxon>
        <taxon>Bahieae</taxon>
        <taxon>Florestina</taxon>
    </lineage>
</organism>
<geneLocation type="chloroplast"/>